<sequence length="392" mass="42637">MQPIGTALRPHATRVMLLGAGELGKEVAIESQRLGLEVIAVDRYADAPAMQVAHRSHVMDMRDGDSLRALIERERPDYIVPEIEAIATQTLLQLESDGQRVVPCARAVQLTMNREGIRRLAAETLALPTSPYRFADSIEAFRQAVTEIGYPCFAKPVMSSSGKGQSILRNDDDVAPAWQYARQGARGDADSVIVEGEVRFDFEITLLTVQASDGIHFCAPIGHRQQEGDYRESWQPQAMSPAALARAQAIAASVVRALGGYGLFGVELFVRGDEVIFSEVSPRPHDTGLVTLVSQDLSEFALHVRAFLGLPIGVIRQFGPCASAVLLPSLHSDDVTFANLSQALRPATQLRLFGKPHIDGVRRLGVALAWGESTETARQRARDSAASVVIRP</sequence>
<evidence type="ECO:0000255" key="1">
    <source>
        <dbReference type="HAMAP-Rule" id="MF_01643"/>
    </source>
</evidence>
<name>PURT_EDWI9</name>
<reference key="1">
    <citation type="submission" date="2009-03" db="EMBL/GenBank/DDBJ databases">
        <title>Complete genome sequence of Edwardsiella ictaluri 93-146.</title>
        <authorList>
            <person name="Williams M.L."/>
            <person name="Gillaspy A.F."/>
            <person name="Dyer D.W."/>
            <person name="Thune R.L."/>
            <person name="Waldbieser G.C."/>
            <person name="Schuster S.C."/>
            <person name="Gipson J."/>
            <person name="Zaitshik J."/>
            <person name="Landry C."/>
            <person name="Lawrence M.L."/>
        </authorList>
    </citation>
    <scope>NUCLEOTIDE SEQUENCE [LARGE SCALE GENOMIC DNA]</scope>
    <source>
        <strain>93-146</strain>
    </source>
</reference>
<feature type="chain" id="PRO_1000215837" description="Formate-dependent phosphoribosylglycinamide formyltransferase">
    <location>
        <begin position="1"/>
        <end position="392"/>
    </location>
</feature>
<feature type="domain" description="ATP-grasp" evidence="1">
    <location>
        <begin position="119"/>
        <end position="308"/>
    </location>
</feature>
<feature type="binding site" evidence="1">
    <location>
        <begin position="22"/>
        <end position="23"/>
    </location>
    <ligand>
        <name>N(1)-(5-phospho-beta-D-ribosyl)glycinamide</name>
        <dbReference type="ChEBI" id="CHEBI:143788"/>
    </ligand>
</feature>
<feature type="binding site" evidence="1">
    <location>
        <position position="82"/>
    </location>
    <ligand>
        <name>N(1)-(5-phospho-beta-D-ribosyl)glycinamide</name>
        <dbReference type="ChEBI" id="CHEBI:143788"/>
    </ligand>
</feature>
<feature type="binding site" evidence="1">
    <location>
        <position position="114"/>
    </location>
    <ligand>
        <name>ATP</name>
        <dbReference type="ChEBI" id="CHEBI:30616"/>
    </ligand>
</feature>
<feature type="binding site" evidence="1">
    <location>
        <position position="155"/>
    </location>
    <ligand>
        <name>ATP</name>
        <dbReference type="ChEBI" id="CHEBI:30616"/>
    </ligand>
</feature>
<feature type="binding site" evidence="1">
    <location>
        <begin position="160"/>
        <end position="165"/>
    </location>
    <ligand>
        <name>ATP</name>
        <dbReference type="ChEBI" id="CHEBI:30616"/>
    </ligand>
</feature>
<feature type="binding site" evidence="1">
    <location>
        <begin position="195"/>
        <end position="198"/>
    </location>
    <ligand>
        <name>ATP</name>
        <dbReference type="ChEBI" id="CHEBI:30616"/>
    </ligand>
</feature>
<feature type="binding site" evidence="1">
    <location>
        <position position="203"/>
    </location>
    <ligand>
        <name>ATP</name>
        <dbReference type="ChEBI" id="CHEBI:30616"/>
    </ligand>
</feature>
<feature type="binding site" evidence="1">
    <location>
        <position position="267"/>
    </location>
    <ligand>
        <name>Mg(2+)</name>
        <dbReference type="ChEBI" id="CHEBI:18420"/>
    </ligand>
</feature>
<feature type="binding site" evidence="1">
    <location>
        <position position="279"/>
    </location>
    <ligand>
        <name>Mg(2+)</name>
        <dbReference type="ChEBI" id="CHEBI:18420"/>
    </ligand>
</feature>
<feature type="binding site" evidence="1">
    <location>
        <position position="286"/>
    </location>
    <ligand>
        <name>N(1)-(5-phospho-beta-D-ribosyl)glycinamide</name>
        <dbReference type="ChEBI" id="CHEBI:143788"/>
    </ligand>
</feature>
<feature type="binding site" evidence="1">
    <location>
        <position position="355"/>
    </location>
    <ligand>
        <name>N(1)-(5-phospho-beta-D-ribosyl)glycinamide</name>
        <dbReference type="ChEBI" id="CHEBI:143788"/>
    </ligand>
</feature>
<feature type="binding site" evidence="1">
    <location>
        <begin position="362"/>
        <end position="363"/>
    </location>
    <ligand>
        <name>N(1)-(5-phospho-beta-D-ribosyl)glycinamide</name>
        <dbReference type="ChEBI" id="CHEBI:143788"/>
    </ligand>
</feature>
<protein>
    <recommendedName>
        <fullName evidence="1">Formate-dependent phosphoribosylglycinamide formyltransferase</fullName>
        <ecNumber evidence="1">6.3.1.21</ecNumber>
    </recommendedName>
    <alternativeName>
        <fullName evidence="1">5'-phosphoribosylglycinamide transformylase 2</fullName>
    </alternativeName>
    <alternativeName>
        <fullName evidence="1">Formate-dependent GAR transformylase</fullName>
    </alternativeName>
    <alternativeName>
        <fullName evidence="1">GAR transformylase 2</fullName>
        <shortName evidence="1">GART 2</shortName>
    </alternativeName>
    <alternativeName>
        <fullName evidence="1">Non-folate glycinamide ribonucleotide transformylase</fullName>
    </alternativeName>
    <alternativeName>
        <fullName evidence="1">Phosphoribosylglycinamide formyltransferase 2</fullName>
    </alternativeName>
</protein>
<proteinExistence type="inferred from homology"/>
<dbReference type="EC" id="6.3.1.21" evidence="1"/>
<dbReference type="EMBL" id="CP001600">
    <property type="protein sequence ID" value="ACR69038.1"/>
    <property type="molecule type" value="Genomic_DNA"/>
</dbReference>
<dbReference type="RefSeq" id="WP_015871184.1">
    <property type="nucleotide sequence ID" value="NZ_CP169062.1"/>
</dbReference>
<dbReference type="SMR" id="C5BGW0"/>
<dbReference type="GeneID" id="69538812"/>
<dbReference type="KEGG" id="eic:NT01EI_1862"/>
<dbReference type="PATRIC" id="fig|634503.3.peg.1671"/>
<dbReference type="HOGENOM" id="CLU_011534_1_3_6"/>
<dbReference type="OrthoDB" id="9804625at2"/>
<dbReference type="UniPathway" id="UPA00074">
    <property type="reaction ID" value="UER00127"/>
</dbReference>
<dbReference type="Proteomes" id="UP000001485">
    <property type="component" value="Chromosome"/>
</dbReference>
<dbReference type="GO" id="GO:0005829">
    <property type="term" value="C:cytosol"/>
    <property type="evidence" value="ECO:0007669"/>
    <property type="project" value="TreeGrafter"/>
</dbReference>
<dbReference type="GO" id="GO:0005524">
    <property type="term" value="F:ATP binding"/>
    <property type="evidence" value="ECO:0007669"/>
    <property type="project" value="UniProtKB-UniRule"/>
</dbReference>
<dbReference type="GO" id="GO:0000287">
    <property type="term" value="F:magnesium ion binding"/>
    <property type="evidence" value="ECO:0007669"/>
    <property type="project" value="InterPro"/>
</dbReference>
<dbReference type="GO" id="GO:0043815">
    <property type="term" value="F:phosphoribosylglycinamide formyltransferase 2 activity"/>
    <property type="evidence" value="ECO:0007669"/>
    <property type="project" value="UniProtKB-UniRule"/>
</dbReference>
<dbReference type="GO" id="GO:0004644">
    <property type="term" value="F:phosphoribosylglycinamide formyltransferase activity"/>
    <property type="evidence" value="ECO:0007669"/>
    <property type="project" value="InterPro"/>
</dbReference>
<dbReference type="GO" id="GO:0006189">
    <property type="term" value="P:'de novo' IMP biosynthetic process"/>
    <property type="evidence" value="ECO:0007669"/>
    <property type="project" value="UniProtKB-UniRule"/>
</dbReference>
<dbReference type="FunFam" id="3.30.1490.20:FF:000013">
    <property type="entry name" value="Formate-dependent phosphoribosylglycinamide formyltransferase"/>
    <property type="match status" value="1"/>
</dbReference>
<dbReference type="FunFam" id="3.30.470.20:FF:000027">
    <property type="entry name" value="Formate-dependent phosphoribosylglycinamide formyltransferase"/>
    <property type="match status" value="1"/>
</dbReference>
<dbReference type="FunFam" id="3.40.50.20:FF:000007">
    <property type="entry name" value="Formate-dependent phosphoribosylglycinamide formyltransferase"/>
    <property type="match status" value="1"/>
</dbReference>
<dbReference type="Gene3D" id="3.40.50.20">
    <property type="match status" value="1"/>
</dbReference>
<dbReference type="Gene3D" id="3.30.1490.20">
    <property type="entry name" value="ATP-grasp fold, A domain"/>
    <property type="match status" value="1"/>
</dbReference>
<dbReference type="Gene3D" id="3.30.470.20">
    <property type="entry name" value="ATP-grasp fold, B domain"/>
    <property type="match status" value="1"/>
</dbReference>
<dbReference type="HAMAP" id="MF_01643">
    <property type="entry name" value="PurT"/>
    <property type="match status" value="1"/>
</dbReference>
<dbReference type="InterPro" id="IPR011761">
    <property type="entry name" value="ATP-grasp"/>
</dbReference>
<dbReference type="InterPro" id="IPR003135">
    <property type="entry name" value="ATP-grasp_carboxylate-amine"/>
</dbReference>
<dbReference type="InterPro" id="IPR013815">
    <property type="entry name" value="ATP_grasp_subdomain_1"/>
</dbReference>
<dbReference type="InterPro" id="IPR016185">
    <property type="entry name" value="PreATP-grasp_dom_sf"/>
</dbReference>
<dbReference type="InterPro" id="IPR005862">
    <property type="entry name" value="PurT"/>
</dbReference>
<dbReference type="InterPro" id="IPR054350">
    <property type="entry name" value="PurT/PurK_preATP-grasp"/>
</dbReference>
<dbReference type="InterPro" id="IPR048740">
    <property type="entry name" value="PurT_C"/>
</dbReference>
<dbReference type="InterPro" id="IPR011054">
    <property type="entry name" value="Rudment_hybrid_motif"/>
</dbReference>
<dbReference type="NCBIfam" id="NF006766">
    <property type="entry name" value="PRK09288.1"/>
    <property type="match status" value="1"/>
</dbReference>
<dbReference type="NCBIfam" id="TIGR01142">
    <property type="entry name" value="purT"/>
    <property type="match status" value="1"/>
</dbReference>
<dbReference type="PANTHER" id="PTHR43055">
    <property type="entry name" value="FORMATE-DEPENDENT PHOSPHORIBOSYLGLYCINAMIDE FORMYLTRANSFERASE"/>
    <property type="match status" value="1"/>
</dbReference>
<dbReference type="PANTHER" id="PTHR43055:SF1">
    <property type="entry name" value="FORMATE-DEPENDENT PHOSPHORIBOSYLGLYCINAMIDE FORMYLTRANSFERASE"/>
    <property type="match status" value="1"/>
</dbReference>
<dbReference type="Pfam" id="PF02222">
    <property type="entry name" value="ATP-grasp"/>
    <property type="match status" value="1"/>
</dbReference>
<dbReference type="Pfam" id="PF21244">
    <property type="entry name" value="PurT_C"/>
    <property type="match status" value="1"/>
</dbReference>
<dbReference type="Pfam" id="PF22660">
    <property type="entry name" value="RS_preATP-grasp-like"/>
    <property type="match status" value="1"/>
</dbReference>
<dbReference type="SUPFAM" id="SSF56059">
    <property type="entry name" value="Glutathione synthetase ATP-binding domain-like"/>
    <property type="match status" value="1"/>
</dbReference>
<dbReference type="SUPFAM" id="SSF52440">
    <property type="entry name" value="PreATP-grasp domain"/>
    <property type="match status" value="1"/>
</dbReference>
<dbReference type="SUPFAM" id="SSF51246">
    <property type="entry name" value="Rudiment single hybrid motif"/>
    <property type="match status" value="1"/>
</dbReference>
<dbReference type="PROSITE" id="PS50975">
    <property type="entry name" value="ATP_GRASP"/>
    <property type="match status" value="1"/>
</dbReference>
<organism>
    <name type="scientific">Edwardsiella ictaluri (strain 93-146)</name>
    <dbReference type="NCBI Taxonomy" id="634503"/>
    <lineage>
        <taxon>Bacteria</taxon>
        <taxon>Pseudomonadati</taxon>
        <taxon>Pseudomonadota</taxon>
        <taxon>Gammaproteobacteria</taxon>
        <taxon>Enterobacterales</taxon>
        <taxon>Hafniaceae</taxon>
        <taxon>Edwardsiella</taxon>
    </lineage>
</organism>
<gene>
    <name evidence="1" type="primary">purT</name>
    <name type="ordered locus">NT01EI_1862</name>
</gene>
<comment type="function">
    <text evidence="1">Involved in the de novo purine biosynthesis. Catalyzes the transfer of formate to 5-phospho-ribosyl-glycinamide (GAR), producing 5-phospho-ribosyl-N-formylglycinamide (FGAR). Formate is provided by PurU via hydrolysis of 10-formyl-tetrahydrofolate.</text>
</comment>
<comment type="catalytic activity">
    <reaction evidence="1">
        <text>N(1)-(5-phospho-beta-D-ribosyl)glycinamide + formate + ATP = N(2)-formyl-N(1)-(5-phospho-beta-D-ribosyl)glycinamide + ADP + phosphate + H(+)</text>
        <dbReference type="Rhea" id="RHEA:24829"/>
        <dbReference type="ChEBI" id="CHEBI:15378"/>
        <dbReference type="ChEBI" id="CHEBI:15740"/>
        <dbReference type="ChEBI" id="CHEBI:30616"/>
        <dbReference type="ChEBI" id="CHEBI:43474"/>
        <dbReference type="ChEBI" id="CHEBI:143788"/>
        <dbReference type="ChEBI" id="CHEBI:147286"/>
        <dbReference type="ChEBI" id="CHEBI:456216"/>
        <dbReference type="EC" id="6.3.1.21"/>
    </reaction>
    <physiologicalReaction direction="left-to-right" evidence="1">
        <dbReference type="Rhea" id="RHEA:24830"/>
    </physiologicalReaction>
</comment>
<comment type="pathway">
    <text evidence="1">Purine metabolism; IMP biosynthesis via de novo pathway; N(2)-formyl-N(1)-(5-phospho-D-ribosyl)glycinamide from N(1)-(5-phospho-D-ribosyl)glycinamide (formate route): step 1/1.</text>
</comment>
<comment type="subunit">
    <text evidence="1">Homodimer.</text>
</comment>
<comment type="similarity">
    <text evidence="1">Belongs to the PurK/PurT family.</text>
</comment>
<keyword id="KW-0067">ATP-binding</keyword>
<keyword id="KW-0436">Ligase</keyword>
<keyword id="KW-0460">Magnesium</keyword>
<keyword id="KW-0479">Metal-binding</keyword>
<keyword id="KW-0547">Nucleotide-binding</keyword>
<keyword id="KW-0658">Purine biosynthesis</keyword>
<accession>C5BGW0</accession>